<gene>
    <name type="primary">clpB</name>
    <name type="ordered locus">BT_4597</name>
</gene>
<keyword id="KW-0067">ATP-binding</keyword>
<keyword id="KW-0143">Chaperone</keyword>
<keyword id="KW-0175">Coiled coil</keyword>
<keyword id="KW-0963">Cytoplasm</keyword>
<keyword id="KW-0547">Nucleotide-binding</keyword>
<keyword id="KW-1185">Reference proteome</keyword>
<keyword id="KW-0677">Repeat</keyword>
<keyword id="KW-0346">Stress response</keyword>
<sequence length="862" mass="97189">MNFNNFTIKSQEAVQEAVNLVQSRGQQAIEPAHILHGVMKVGENVTNFIFQKLGMNGQQVALVVDKQIESLPKVSGGEPYLSRESNEVLQKATQYSKEMGDEFVSLEHILLALLTVKSTVSTILKDAGMTEKELRNAINELRKGEKVTSQSSEDNYQSLEKYAINLNEAARSGKLDPVIGRDEEIRRVLQILSRRTKNNPILIGEPGTGKTAIVEGLAHRILRGDVPENLKNKQVYSLDMGALVAGAKYKGEFEERLKSVVNEVKKSEGDIILFIDEIHTLVGAGKGEGAMDAANILKPALARGELRSIGATTLDEYQKYFEKDKALERRFQIVQVDEPDTLSTISILRGLKERYENHHHVRIKDDAIIAAVELSSRYITDRFLPDKAIDLMDEAAAKLRMEVDSVPEELDEISRKIKQLEIEREAIKRENDKPKLEIIGKELAELKEVEKSFKAKWQSEKTLMDKIQQNKVEIENLKFEAEKAEREGDYGKVAEIRYGKLQALDKEIEDTQEKLRGMQGDKAMIKEEVDAEDIADVVSRWTGIPVSKMMQSEKDKLLHLEDELHQRVIGQDEAIEAVADAVRRSRAGLQDPKRPIGSFIFLGTTGVGKTELAKALAEFLFDDESMMTRIDMSEYQEKHSVSRLVGAPPGYVGYDEGGQLTEAIRRKPYSVVLFDEIEKAHPDVFNILLQVLDDGRLTDNKGRVVNFKNTIIIMTSNMGSSYIQSQMEKLSGSNKEEVIEETKKEVMNMLKKNIRPEFLNRIDETIMFLPLTETEIRQIVLLQIKGVQKMLAENGVELEMTDAALNFLSQVGYDPEFGARPVKRAIQRYLLNDLSKKLLSQEVDRSKAIIVDSNGDGLVFRN</sequence>
<comment type="function">
    <text evidence="1">Part of a stress-induced multi-chaperone system, it is involved in the recovery of the cell from heat-induced damage, in cooperation with DnaK, DnaJ and GrpE. Acts before DnaK, in the processing of protein aggregates. Protein binding stimulates the ATPase activity; ATP hydrolysis unfolds the denatured protein aggregates, which probably helps expose new hydrophobic binding sites on the surface of ClpB-bound aggregates, contributing to the solubilization and refolding of denatured protein aggregates by DnaK (By similarity).</text>
</comment>
<comment type="subunit">
    <text evidence="1">Homohexamer. The oligomerization is ATP-dependent (By similarity).</text>
</comment>
<comment type="subcellular location">
    <subcellularLocation>
        <location evidence="3">Cytoplasm</location>
    </subcellularLocation>
</comment>
<comment type="domain">
    <text evidence="1">The Clp repeat (R) domain probably functions as a substrate-discriminating domain, recruiting aggregated proteins to the ClpB hexamer and/or stabilizing bound proteins. The NBD2 domain is responsible for oligomerization, whereas the NBD1 domain stabilizes the hexamer probably in an ATP-dependent manner. The movement of the coiled-coil domain is essential for ClpB ability to rescue proteins from an aggregated state, probably by pulling apart large aggregated proteins, which are bound between the coiled-coils motifs of adjacent ClpB subunits in the functional hexamer (By similarity).</text>
</comment>
<comment type="similarity">
    <text evidence="3">Belongs to the ClpA/ClpB family.</text>
</comment>
<evidence type="ECO:0000250" key="1"/>
<evidence type="ECO:0000255" key="2">
    <source>
        <dbReference type="PROSITE-ProRule" id="PRU01251"/>
    </source>
</evidence>
<evidence type="ECO:0000305" key="3"/>
<accession>Q89YY3</accession>
<dbReference type="EMBL" id="AE015928">
    <property type="protein sequence ID" value="AAO79702.1"/>
    <property type="molecule type" value="Genomic_DNA"/>
</dbReference>
<dbReference type="RefSeq" id="NP_813508.1">
    <property type="nucleotide sequence ID" value="NC_004663.1"/>
</dbReference>
<dbReference type="RefSeq" id="WP_008764749.1">
    <property type="nucleotide sequence ID" value="NC_004663.1"/>
</dbReference>
<dbReference type="SMR" id="Q89YY3"/>
<dbReference type="FunCoup" id="Q89YY3">
    <property type="interactions" value="516"/>
</dbReference>
<dbReference type="STRING" id="226186.BT_4597"/>
<dbReference type="PaxDb" id="226186-BT_4597"/>
<dbReference type="EnsemblBacteria" id="AAO79702">
    <property type="protein sequence ID" value="AAO79702"/>
    <property type="gene ID" value="BT_4597"/>
</dbReference>
<dbReference type="GeneID" id="60925771"/>
<dbReference type="KEGG" id="bth:BT_4597"/>
<dbReference type="PATRIC" id="fig|226186.12.peg.4676"/>
<dbReference type="eggNOG" id="COG0542">
    <property type="taxonomic scope" value="Bacteria"/>
</dbReference>
<dbReference type="HOGENOM" id="CLU_005070_4_0_10"/>
<dbReference type="InParanoid" id="Q89YY3"/>
<dbReference type="OrthoDB" id="9803641at2"/>
<dbReference type="Proteomes" id="UP000001414">
    <property type="component" value="Chromosome"/>
</dbReference>
<dbReference type="GO" id="GO:0005737">
    <property type="term" value="C:cytoplasm"/>
    <property type="evidence" value="ECO:0000318"/>
    <property type="project" value="GO_Central"/>
</dbReference>
<dbReference type="GO" id="GO:0005524">
    <property type="term" value="F:ATP binding"/>
    <property type="evidence" value="ECO:0007669"/>
    <property type="project" value="UniProtKB-KW"/>
</dbReference>
<dbReference type="GO" id="GO:0016887">
    <property type="term" value="F:ATP hydrolysis activity"/>
    <property type="evidence" value="ECO:0000318"/>
    <property type="project" value="GO_Central"/>
</dbReference>
<dbReference type="GO" id="GO:0034605">
    <property type="term" value="P:cellular response to heat"/>
    <property type="evidence" value="ECO:0000318"/>
    <property type="project" value="GO_Central"/>
</dbReference>
<dbReference type="GO" id="GO:0042026">
    <property type="term" value="P:protein refolding"/>
    <property type="evidence" value="ECO:0007669"/>
    <property type="project" value="InterPro"/>
</dbReference>
<dbReference type="CDD" id="cd00009">
    <property type="entry name" value="AAA"/>
    <property type="match status" value="1"/>
</dbReference>
<dbReference type="CDD" id="cd19499">
    <property type="entry name" value="RecA-like_ClpB_Hsp104-like"/>
    <property type="match status" value="1"/>
</dbReference>
<dbReference type="FunFam" id="3.40.50.300:FF:000120">
    <property type="entry name" value="ATP-dependent chaperone ClpB"/>
    <property type="match status" value="1"/>
</dbReference>
<dbReference type="FunFam" id="3.40.50.300:FF:000025">
    <property type="entry name" value="ATP-dependent Clp protease subunit"/>
    <property type="match status" value="1"/>
</dbReference>
<dbReference type="FunFam" id="3.40.50.300:FF:000010">
    <property type="entry name" value="Chaperone clpB 1, putative"/>
    <property type="match status" value="1"/>
</dbReference>
<dbReference type="Gene3D" id="1.10.8.60">
    <property type="match status" value="1"/>
</dbReference>
<dbReference type="Gene3D" id="1.10.1780.10">
    <property type="entry name" value="Clp, N-terminal domain"/>
    <property type="match status" value="1"/>
</dbReference>
<dbReference type="Gene3D" id="3.40.50.300">
    <property type="entry name" value="P-loop containing nucleotide triphosphate hydrolases"/>
    <property type="match status" value="3"/>
</dbReference>
<dbReference type="InterPro" id="IPR003593">
    <property type="entry name" value="AAA+_ATPase"/>
</dbReference>
<dbReference type="InterPro" id="IPR003959">
    <property type="entry name" value="ATPase_AAA_core"/>
</dbReference>
<dbReference type="InterPro" id="IPR017730">
    <property type="entry name" value="Chaperonin_ClpB"/>
</dbReference>
<dbReference type="InterPro" id="IPR019489">
    <property type="entry name" value="Clp_ATPase_C"/>
</dbReference>
<dbReference type="InterPro" id="IPR036628">
    <property type="entry name" value="Clp_N_dom_sf"/>
</dbReference>
<dbReference type="InterPro" id="IPR004176">
    <property type="entry name" value="Clp_R_dom"/>
</dbReference>
<dbReference type="InterPro" id="IPR001270">
    <property type="entry name" value="ClpA/B"/>
</dbReference>
<dbReference type="InterPro" id="IPR018368">
    <property type="entry name" value="ClpA/B_CS1"/>
</dbReference>
<dbReference type="InterPro" id="IPR028299">
    <property type="entry name" value="ClpA/B_CS2"/>
</dbReference>
<dbReference type="InterPro" id="IPR041546">
    <property type="entry name" value="ClpA/ClpB_AAA_lid"/>
</dbReference>
<dbReference type="InterPro" id="IPR050130">
    <property type="entry name" value="ClpA_ClpB"/>
</dbReference>
<dbReference type="InterPro" id="IPR027417">
    <property type="entry name" value="P-loop_NTPase"/>
</dbReference>
<dbReference type="NCBIfam" id="TIGR03346">
    <property type="entry name" value="chaperone_ClpB"/>
    <property type="match status" value="1"/>
</dbReference>
<dbReference type="PANTHER" id="PTHR11638">
    <property type="entry name" value="ATP-DEPENDENT CLP PROTEASE"/>
    <property type="match status" value="1"/>
</dbReference>
<dbReference type="PANTHER" id="PTHR11638:SF18">
    <property type="entry name" value="HEAT SHOCK PROTEIN 104"/>
    <property type="match status" value="1"/>
</dbReference>
<dbReference type="Pfam" id="PF00004">
    <property type="entry name" value="AAA"/>
    <property type="match status" value="1"/>
</dbReference>
<dbReference type="Pfam" id="PF07724">
    <property type="entry name" value="AAA_2"/>
    <property type="match status" value="1"/>
</dbReference>
<dbReference type="Pfam" id="PF17871">
    <property type="entry name" value="AAA_lid_9"/>
    <property type="match status" value="1"/>
</dbReference>
<dbReference type="Pfam" id="PF02861">
    <property type="entry name" value="Clp_N"/>
    <property type="match status" value="2"/>
</dbReference>
<dbReference type="Pfam" id="PF10431">
    <property type="entry name" value="ClpB_D2-small"/>
    <property type="match status" value="1"/>
</dbReference>
<dbReference type="PRINTS" id="PR00300">
    <property type="entry name" value="CLPPROTEASEA"/>
</dbReference>
<dbReference type="SMART" id="SM00382">
    <property type="entry name" value="AAA"/>
    <property type="match status" value="2"/>
</dbReference>
<dbReference type="SMART" id="SM01086">
    <property type="entry name" value="ClpB_D2-small"/>
    <property type="match status" value="1"/>
</dbReference>
<dbReference type="SUPFAM" id="SSF81923">
    <property type="entry name" value="Double Clp-N motif"/>
    <property type="match status" value="1"/>
</dbReference>
<dbReference type="SUPFAM" id="SSF52540">
    <property type="entry name" value="P-loop containing nucleoside triphosphate hydrolases"/>
    <property type="match status" value="2"/>
</dbReference>
<dbReference type="PROSITE" id="PS51903">
    <property type="entry name" value="CLP_R"/>
    <property type="match status" value="1"/>
</dbReference>
<dbReference type="PROSITE" id="PS00870">
    <property type="entry name" value="CLPAB_1"/>
    <property type="match status" value="1"/>
</dbReference>
<dbReference type="PROSITE" id="PS00871">
    <property type="entry name" value="CLPAB_2"/>
    <property type="match status" value="1"/>
</dbReference>
<organism>
    <name type="scientific">Bacteroides thetaiotaomicron (strain ATCC 29148 / DSM 2079 / JCM 5827 / CCUG 10774 / NCTC 10582 / VPI-5482 / E50)</name>
    <dbReference type="NCBI Taxonomy" id="226186"/>
    <lineage>
        <taxon>Bacteria</taxon>
        <taxon>Pseudomonadati</taxon>
        <taxon>Bacteroidota</taxon>
        <taxon>Bacteroidia</taxon>
        <taxon>Bacteroidales</taxon>
        <taxon>Bacteroidaceae</taxon>
        <taxon>Bacteroides</taxon>
    </lineage>
</organism>
<reference key="1">
    <citation type="journal article" date="2003" name="Science">
        <title>A genomic view of the human-Bacteroides thetaiotaomicron symbiosis.</title>
        <authorList>
            <person name="Xu J."/>
            <person name="Bjursell M.K."/>
            <person name="Himrod J."/>
            <person name="Deng S."/>
            <person name="Carmichael L.K."/>
            <person name="Chiang H.C."/>
            <person name="Hooper L.V."/>
            <person name="Gordon J.I."/>
        </authorList>
    </citation>
    <scope>NUCLEOTIDE SEQUENCE [LARGE SCALE GENOMIC DNA]</scope>
    <source>
        <strain>ATCC 29148 / DSM 2079 / JCM 5827 / CCUG 10774 / NCTC 10582 / VPI-5482 / E50</strain>
    </source>
</reference>
<feature type="chain" id="PRO_0000191092" description="Chaperone protein ClpB">
    <location>
        <begin position="1"/>
        <end position="862"/>
    </location>
</feature>
<feature type="domain" description="Clp R" evidence="2">
    <location>
        <begin position="3"/>
        <end position="144"/>
    </location>
</feature>
<feature type="region of interest" description="Repeat 1" evidence="2">
    <location>
        <begin position="6"/>
        <end position="71"/>
    </location>
</feature>
<feature type="region of interest" description="Repeat 2" evidence="2">
    <location>
        <begin position="81"/>
        <end position="144"/>
    </location>
</feature>
<feature type="region of interest" description="NBD1" evidence="1">
    <location>
        <begin position="157"/>
        <end position="338"/>
    </location>
</feature>
<feature type="region of interest" description="Linker" evidence="1">
    <location>
        <begin position="339"/>
        <end position="543"/>
    </location>
</feature>
<feature type="region of interest" description="NBD2" evidence="1">
    <location>
        <begin position="553"/>
        <end position="770"/>
    </location>
</feature>
<feature type="region of interest" description="C-terminal" evidence="1">
    <location>
        <begin position="771"/>
        <end position="862"/>
    </location>
</feature>
<feature type="coiled-coil region" evidence="1">
    <location>
        <begin position="389"/>
        <end position="520"/>
    </location>
</feature>
<feature type="binding site" evidence="1">
    <location>
        <begin position="204"/>
        <end position="211"/>
    </location>
    <ligand>
        <name>ATP</name>
        <dbReference type="ChEBI" id="CHEBI:30616"/>
        <label>1</label>
    </ligand>
</feature>
<feature type="binding site" evidence="1">
    <location>
        <begin position="603"/>
        <end position="610"/>
    </location>
    <ligand>
        <name>ATP</name>
        <dbReference type="ChEBI" id="CHEBI:30616"/>
        <label>2</label>
    </ligand>
</feature>
<name>CLPB_BACTN</name>
<proteinExistence type="inferred from homology"/>
<protein>
    <recommendedName>
        <fullName>Chaperone protein ClpB</fullName>
    </recommendedName>
</protein>